<dbReference type="EMBL" id="AF057124">
    <property type="protein sequence ID" value="AAC33704.1"/>
    <property type="molecule type" value="Genomic_DNA"/>
</dbReference>
<dbReference type="EMBL" id="D26521">
    <property type="protein sequence ID" value="BAA05527.1"/>
    <property type="molecule type" value="Genomic_DNA"/>
</dbReference>
<dbReference type="SMR" id="Q34900"/>
<dbReference type="GO" id="GO:0005743">
    <property type="term" value="C:mitochondrial inner membrane"/>
    <property type="evidence" value="ECO:0007669"/>
    <property type="project" value="UniProtKB-SubCell"/>
</dbReference>
<dbReference type="GO" id="GO:0045275">
    <property type="term" value="C:respiratory chain complex III"/>
    <property type="evidence" value="ECO:0007669"/>
    <property type="project" value="InterPro"/>
</dbReference>
<dbReference type="GO" id="GO:0046872">
    <property type="term" value="F:metal ion binding"/>
    <property type="evidence" value="ECO:0007669"/>
    <property type="project" value="UniProtKB-KW"/>
</dbReference>
<dbReference type="GO" id="GO:0008121">
    <property type="term" value="F:ubiquinol-cytochrome-c reductase activity"/>
    <property type="evidence" value="ECO:0007669"/>
    <property type="project" value="InterPro"/>
</dbReference>
<dbReference type="GO" id="GO:0006122">
    <property type="term" value="P:mitochondrial electron transport, ubiquinol to cytochrome c"/>
    <property type="evidence" value="ECO:0007669"/>
    <property type="project" value="TreeGrafter"/>
</dbReference>
<dbReference type="CDD" id="cd00290">
    <property type="entry name" value="cytochrome_b_C"/>
    <property type="match status" value="1"/>
</dbReference>
<dbReference type="CDD" id="cd00284">
    <property type="entry name" value="Cytochrome_b_N"/>
    <property type="match status" value="1"/>
</dbReference>
<dbReference type="FunFam" id="1.20.810.10:FF:000002">
    <property type="entry name" value="Cytochrome b"/>
    <property type="match status" value="1"/>
</dbReference>
<dbReference type="Gene3D" id="1.20.810.10">
    <property type="entry name" value="Cytochrome Bc1 Complex, Chain C"/>
    <property type="match status" value="1"/>
</dbReference>
<dbReference type="InterPro" id="IPR005798">
    <property type="entry name" value="Cyt_b/b6_C"/>
</dbReference>
<dbReference type="InterPro" id="IPR036150">
    <property type="entry name" value="Cyt_b/b6_C_sf"/>
</dbReference>
<dbReference type="InterPro" id="IPR005797">
    <property type="entry name" value="Cyt_b/b6_N"/>
</dbReference>
<dbReference type="InterPro" id="IPR027387">
    <property type="entry name" value="Cytb/b6-like_sf"/>
</dbReference>
<dbReference type="InterPro" id="IPR030689">
    <property type="entry name" value="Cytochrome_b"/>
</dbReference>
<dbReference type="InterPro" id="IPR048260">
    <property type="entry name" value="Cytochrome_b_C_euk/bac"/>
</dbReference>
<dbReference type="InterPro" id="IPR048259">
    <property type="entry name" value="Cytochrome_b_N_euk/bac"/>
</dbReference>
<dbReference type="InterPro" id="IPR016174">
    <property type="entry name" value="Di-haem_cyt_TM"/>
</dbReference>
<dbReference type="PANTHER" id="PTHR19271">
    <property type="entry name" value="CYTOCHROME B"/>
    <property type="match status" value="1"/>
</dbReference>
<dbReference type="PANTHER" id="PTHR19271:SF16">
    <property type="entry name" value="CYTOCHROME B"/>
    <property type="match status" value="1"/>
</dbReference>
<dbReference type="Pfam" id="PF00032">
    <property type="entry name" value="Cytochrom_B_C"/>
    <property type="match status" value="1"/>
</dbReference>
<dbReference type="Pfam" id="PF00033">
    <property type="entry name" value="Cytochrome_B"/>
    <property type="match status" value="1"/>
</dbReference>
<dbReference type="PIRSF" id="PIRSF038885">
    <property type="entry name" value="COB"/>
    <property type="match status" value="1"/>
</dbReference>
<dbReference type="SUPFAM" id="SSF81648">
    <property type="entry name" value="a domain/subunit of cytochrome bc1 complex (Ubiquinol-cytochrome c reductase)"/>
    <property type="match status" value="1"/>
</dbReference>
<dbReference type="SUPFAM" id="SSF81342">
    <property type="entry name" value="Transmembrane di-heme cytochromes"/>
    <property type="match status" value="1"/>
</dbReference>
<dbReference type="PROSITE" id="PS51003">
    <property type="entry name" value="CYTB_CTER"/>
    <property type="match status" value="1"/>
</dbReference>
<dbReference type="PROSITE" id="PS51002">
    <property type="entry name" value="CYTB_NTER"/>
    <property type="match status" value="1"/>
</dbReference>
<geneLocation type="mitochondrion"/>
<comment type="function">
    <text evidence="2">Component of the ubiquinol-cytochrome c reductase complex (complex III or cytochrome b-c1 complex) that is part of the mitochondrial respiratory chain. The b-c1 complex mediates electron transfer from ubiquinol to cytochrome c. Contributes to the generation of a proton gradient across the mitochondrial membrane that is then used for ATP synthesis.</text>
</comment>
<comment type="cofactor">
    <cofactor evidence="2">
        <name>heme b</name>
        <dbReference type="ChEBI" id="CHEBI:60344"/>
    </cofactor>
    <text evidence="2">Binds 2 heme b groups non-covalently.</text>
</comment>
<comment type="subunit">
    <text evidence="2">The cytochrome bc1 complex contains 11 subunits: 3 respiratory subunits (MT-CYB, CYC1 and UQCRFS1), 2 core proteins (UQCRC1 and UQCRC2) and 6 low-molecular weight proteins (UQCRH/QCR6, UQCRB/QCR7, UQCRQ/QCR8, UQCR10/QCR9, UQCR11/QCR10 and a cleavage product of UQCRFS1). This cytochrome bc1 complex then forms a dimer.</text>
</comment>
<comment type="subcellular location">
    <subcellularLocation>
        <location evidence="2">Mitochondrion inner membrane</location>
        <topology evidence="2">Multi-pass membrane protein</topology>
    </subcellularLocation>
</comment>
<comment type="miscellaneous">
    <text evidence="1">Heme 1 (or BL or b562) is low-potential and absorbs at about 562 nm, and heme 2 (or BH or b566) is high-potential and absorbs at about 566 nm.</text>
</comment>
<comment type="similarity">
    <text evidence="3 4">Belongs to the cytochrome b family.</text>
</comment>
<comment type="caution">
    <text evidence="2">The full-length protein contains only eight transmembrane helices, not nine as predicted by bioinformatics tools.</text>
</comment>
<proteinExistence type="inferred from homology"/>
<keyword id="KW-0249">Electron transport</keyword>
<keyword id="KW-0349">Heme</keyword>
<keyword id="KW-0408">Iron</keyword>
<keyword id="KW-0472">Membrane</keyword>
<keyword id="KW-0479">Metal-binding</keyword>
<keyword id="KW-0496">Mitochondrion</keyword>
<keyword id="KW-0999">Mitochondrion inner membrane</keyword>
<keyword id="KW-0679">Respiratory chain</keyword>
<keyword id="KW-0812">Transmembrane</keyword>
<keyword id="KW-1133">Transmembrane helix</keyword>
<keyword id="KW-0813">Transport</keyword>
<keyword id="KW-0830">Ubiquinone</keyword>
<organism>
    <name type="scientific">Lutra lutra</name>
    <name type="common">European river otter</name>
    <dbReference type="NCBI Taxonomy" id="9657"/>
    <lineage>
        <taxon>Eukaryota</taxon>
        <taxon>Metazoa</taxon>
        <taxon>Chordata</taxon>
        <taxon>Craniata</taxon>
        <taxon>Vertebrata</taxon>
        <taxon>Euteleostomi</taxon>
        <taxon>Mammalia</taxon>
        <taxon>Eutheria</taxon>
        <taxon>Laurasiatheria</taxon>
        <taxon>Carnivora</taxon>
        <taxon>Caniformia</taxon>
        <taxon>Musteloidea</taxon>
        <taxon>Mustelidae</taxon>
        <taxon>Lutrinae</taxon>
        <taxon>Lutra</taxon>
    </lineage>
</organism>
<feature type="chain" id="PRO_0000061139" description="Cytochrome b">
    <location>
        <begin position="1"/>
        <end position="379"/>
    </location>
</feature>
<feature type="transmembrane region" description="Helical" evidence="2">
    <location>
        <begin position="33"/>
        <end position="53"/>
    </location>
</feature>
<feature type="transmembrane region" description="Helical" evidence="2">
    <location>
        <begin position="77"/>
        <end position="98"/>
    </location>
</feature>
<feature type="transmembrane region" description="Helical" evidence="2">
    <location>
        <begin position="113"/>
        <end position="133"/>
    </location>
</feature>
<feature type="transmembrane region" description="Helical" evidence="2">
    <location>
        <begin position="178"/>
        <end position="198"/>
    </location>
</feature>
<feature type="transmembrane region" description="Helical" evidence="2">
    <location>
        <begin position="226"/>
        <end position="246"/>
    </location>
</feature>
<feature type="transmembrane region" description="Helical" evidence="2">
    <location>
        <begin position="288"/>
        <end position="308"/>
    </location>
</feature>
<feature type="transmembrane region" description="Helical" evidence="2">
    <location>
        <begin position="320"/>
        <end position="340"/>
    </location>
</feature>
<feature type="transmembrane region" description="Helical" evidence="2">
    <location>
        <begin position="347"/>
        <end position="367"/>
    </location>
</feature>
<feature type="binding site" description="axial binding residue" evidence="2">
    <location>
        <position position="83"/>
    </location>
    <ligand>
        <name>heme b</name>
        <dbReference type="ChEBI" id="CHEBI:60344"/>
        <label>b562</label>
    </ligand>
    <ligandPart>
        <name>Fe</name>
        <dbReference type="ChEBI" id="CHEBI:18248"/>
    </ligandPart>
</feature>
<feature type="binding site" description="axial binding residue" evidence="2">
    <location>
        <position position="97"/>
    </location>
    <ligand>
        <name>heme b</name>
        <dbReference type="ChEBI" id="CHEBI:60344"/>
        <label>b566</label>
    </ligand>
    <ligandPart>
        <name>Fe</name>
        <dbReference type="ChEBI" id="CHEBI:18248"/>
    </ligandPart>
</feature>
<feature type="binding site" description="axial binding residue" evidence="2">
    <location>
        <position position="182"/>
    </location>
    <ligand>
        <name>heme b</name>
        <dbReference type="ChEBI" id="CHEBI:60344"/>
        <label>b562</label>
    </ligand>
    <ligandPart>
        <name>Fe</name>
        <dbReference type="ChEBI" id="CHEBI:18248"/>
    </ligandPart>
</feature>
<feature type="binding site" description="axial binding residue" evidence="2">
    <location>
        <position position="196"/>
    </location>
    <ligand>
        <name>heme b</name>
        <dbReference type="ChEBI" id="CHEBI:60344"/>
        <label>b566</label>
    </ligand>
    <ligandPart>
        <name>Fe</name>
        <dbReference type="ChEBI" id="CHEBI:18248"/>
    </ligandPart>
</feature>
<feature type="binding site" evidence="2">
    <location>
        <position position="201"/>
    </location>
    <ligand>
        <name>a ubiquinone</name>
        <dbReference type="ChEBI" id="CHEBI:16389"/>
    </ligand>
</feature>
<name>CYB_LUTLU</name>
<gene>
    <name type="primary">MT-CYB</name>
    <name type="synonym">COB</name>
    <name type="synonym">CYTB</name>
    <name type="synonym">MTCYB</name>
</gene>
<sequence length="379" mass="42492">MTNIRKTHPLAKIINNSLIDLPAPSNISAWWNFGSLLGTCLILQILTGLFLAMHYTSDTTTAFSSVAHICRDVNYGWIIRYMHANGASMFFICLFLHVGRGLYYGSYMFPETWNTGIILLFATMATAFMGYVLPWGQMSFWGATVITNLLSAIPYIGTSLVEWIWGGFSVDKATLTRFFAFHFILPFIILALATIHLLFLHETGSNNPSGIPSNSDKIPFHPYYTIKDILGALLLALMLMMLVLFSPDLLGDPDNYTPANPLNTPPHIKPEWYFLFAYAILRSIPNKLGGVLALVLSILILAIIPLLHTSKQRSMMFRPLSQCLFWLLVADLLTLTWIGGQPAEHPFITIGQLASILYFTLLLILMPIASIIENNLLKW</sequence>
<protein>
    <recommendedName>
        <fullName>Cytochrome b</fullName>
    </recommendedName>
    <alternativeName>
        <fullName>Complex III subunit 3</fullName>
    </alternativeName>
    <alternativeName>
        <fullName>Complex III subunit III</fullName>
    </alternativeName>
    <alternativeName>
        <fullName>Cytochrome b-c1 complex subunit 3</fullName>
    </alternativeName>
    <alternativeName>
        <fullName>Ubiquinol-cytochrome-c reductase complex cytochrome b subunit</fullName>
    </alternativeName>
</protein>
<evidence type="ECO:0000250" key="1"/>
<evidence type="ECO:0000250" key="2">
    <source>
        <dbReference type="UniProtKB" id="P00157"/>
    </source>
</evidence>
<evidence type="ECO:0000255" key="3">
    <source>
        <dbReference type="PROSITE-ProRule" id="PRU00967"/>
    </source>
</evidence>
<evidence type="ECO:0000255" key="4">
    <source>
        <dbReference type="PROSITE-ProRule" id="PRU00968"/>
    </source>
</evidence>
<accession>Q34900</accession>
<reference key="1">
    <citation type="journal article" date="1998" name="J. Zool. (Lond.)">
        <title>Phylogenetic relationships of otters (Carnivora: Mustelidae) based on mitochondrial cytochrome b sequences.</title>
        <authorList>
            <person name="Koepfli K.-P."/>
            <person name="Wayne R.K."/>
        </authorList>
    </citation>
    <scope>NUCLEOTIDE SEQUENCE [GENOMIC DNA]</scope>
</reference>
<reference key="2">
    <citation type="journal article" date="1994" name="Zool. Sci.">
        <title>A molecular phylogeny of the family Mustelidae (Mammalia, Carnivora), based on comparison of mitochondrial cytochrome b nucleotide sequences.</title>
        <authorList>
            <person name="Masuda R."/>
            <person name="Yoshida M.C."/>
        </authorList>
    </citation>
    <scope>NUCLEOTIDE SEQUENCE [GENOMIC DNA] OF 1-125</scope>
    <source>
        <tissue>Muscle</tissue>
    </source>
</reference>